<reference key="1">
    <citation type="journal article" date="1999" name="Microbiology">
        <title>Organization and expression of nitrogen-fixation genes in the aerobic nitrogen-fixing unicellular cyanobacterium Synechococcus sp. strain RF-1.</title>
        <authorList>
            <person name="Huang T.-C."/>
            <person name="Lin R.-F."/>
            <person name="Chu M.-K."/>
            <person name="Chen H.-M."/>
        </authorList>
    </citation>
    <scope>NUCLEOTIDE SEQUENCE [GENOMIC DNA]</scope>
</reference>
<reference key="2">
    <citation type="journal article" date="2011" name="MBio">
        <title>Novel metabolic attributes of the genus Cyanothece, comprising a group of unicellular nitrogen-fixing Cyanobacteria.</title>
        <authorList>
            <person name="Bandyopadhyay A."/>
            <person name="Elvitigala T."/>
            <person name="Welsh E."/>
            <person name="Stockel J."/>
            <person name="Liberton M."/>
            <person name="Min H."/>
            <person name="Sherman L.A."/>
            <person name="Pakrasi H.B."/>
        </authorList>
    </citation>
    <scope>NUCLEOTIDE SEQUENCE [LARGE SCALE GENOMIC DNA]</scope>
    <source>
        <strain>PCC 8801 / RF-1</strain>
    </source>
</reference>
<name>NIFW_RIPO1</name>
<accession>O07360</accession>
<accession>B7JWZ0</accession>
<keyword id="KW-0535">Nitrogen fixation</keyword>
<keyword id="KW-1185">Reference proteome</keyword>
<sequence>MVAEKTFTEFTKLTDAEDFLKFFNIDYDATFVNVNRLHILKQFSLLIQEVDKVFPDVSETEKLEKYQLALTEAYELFKTSSPLETKLFKVFQEPPKNIVLLDDLVKEAGV</sequence>
<dbReference type="EMBL" id="AF003700">
    <property type="protein sequence ID" value="AAC35197.1"/>
    <property type="status" value="ALT_INIT"/>
    <property type="molecule type" value="Genomic_DNA"/>
</dbReference>
<dbReference type="EMBL" id="CP001287">
    <property type="protein sequence ID" value="ACK65839.1"/>
    <property type="molecule type" value="Genomic_DNA"/>
</dbReference>
<dbReference type="RefSeq" id="WP_012595112.1">
    <property type="nucleotide sequence ID" value="NC_011726.1"/>
</dbReference>
<dbReference type="SMR" id="O07360"/>
<dbReference type="STRING" id="41431.PCC8801_1793"/>
<dbReference type="KEGG" id="cyp:PCC8801_1793"/>
<dbReference type="eggNOG" id="ENOG50330W8">
    <property type="taxonomic scope" value="Bacteria"/>
</dbReference>
<dbReference type="HOGENOM" id="CLU_145318_1_0_3"/>
<dbReference type="OrthoDB" id="9811868at2"/>
<dbReference type="Proteomes" id="UP000008204">
    <property type="component" value="Chromosome"/>
</dbReference>
<dbReference type="GO" id="GO:0009399">
    <property type="term" value="P:nitrogen fixation"/>
    <property type="evidence" value="ECO:0007669"/>
    <property type="project" value="UniProtKB-UniRule"/>
</dbReference>
<dbReference type="HAMAP" id="MF_00529">
    <property type="entry name" value="NifW"/>
    <property type="match status" value="1"/>
</dbReference>
<dbReference type="InterPro" id="IPR004893">
    <property type="entry name" value="NifW"/>
</dbReference>
<dbReference type="NCBIfam" id="NF010702">
    <property type="entry name" value="PRK14102.1"/>
    <property type="match status" value="1"/>
</dbReference>
<dbReference type="Pfam" id="PF03206">
    <property type="entry name" value="NifW"/>
    <property type="match status" value="1"/>
</dbReference>
<dbReference type="PIRSF" id="PIRSF005790">
    <property type="entry name" value="NifW"/>
    <property type="match status" value="1"/>
</dbReference>
<proteinExistence type="inferred from homology"/>
<protein>
    <recommendedName>
        <fullName>Nitrogenase-stabilizing/protective protein NifW</fullName>
    </recommendedName>
</protein>
<gene>
    <name type="primary">nifW</name>
    <name type="ordered locus">PCC8801_1793</name>
</gene>
<evidence type="ECO:0000250" key="1"/>
<evidence type="ECO:0000305" key="2"/>
<feature type="chain" id="PRO_0000219542" description="Nitrogenase-stabilizing/protective protein NifW">
    <location>
        <begin position="1"/>
        <end position="110"/>
    </location>
</feature>
<comment type="function">
    <text evidence="1">May protect the nitrogenase Fe-Mo protein from oxidative damage.</text>
</comment>
<comment type="subunit">
    <text evidence="1">Homotrimer; associates with NifD.</text>
</comment>
<comment type="similarity">
    <text evidence="2">Belongs to the NifW family.</text>
</comment>
<comment type="sequence caution" evidence="2">
    <conflict type="erroneous initiation">
        <sequence resource="EMBL-CDS" id="AAC35197"/>
    </conflict>
</comment>
<organism>
    <name type="scientific">Rippkaea orientalis (strain PCC 8801 / RF-1)</name>
    <name type="common">Cyanothece sp. (strain PCC 8801)</name>
    <dbReference type="NCBI Taxonomy" id="41431"/>
    <lineage>
        <taxon>Bacteria</taxon>
        <taxon>Bacillati</taxon>
        <taxon>Cyanobacteriota</taxon>
        <taxon>Cyanophyceae</taxon>
        <taxon>Oscillatoriophycideae</taxon>
        <taxon>Chroococcales</taxon>
        <taxon>Aphanothecaceae</taxon>
        <taxon>Rippkaea</taxon>
        <taxon>Rippkaea orientalis</taxon>
    </lineage>
</organism>